<gene>
    <name evidence="1" type="primary">rplT</name>
    <name type="ordered locus">Kole_1451</name>
</gene>
<name>RL20_KOSOT</name>
<protein>
    <recommendedName>
        <fullName evidence="1">Large ribosomal subunit protein bL20</fullName>
    </recommendedName>
    <alternativeName>
        <fullName evidence="2">50S ribosomal protein L20</fullName>
    </alternativeName>
</protein>
<dbReference type="EMBL" id="CP001634">
    <property type="protein sequence ID" value="ACR80143.1"/>
    <property type="molecule type" value="Genomic_DNA"/>
</dbReference>
<dbReference type="RefSeq" id="WP_015868790.1">
    <property type="nucleotide sequence ID" value="NC_012785.1"/>
</dbReference>
<dbReference type="SMR" id="C5CE41"/>
<dbReference type="STRING" id="521045.Kole_1451"/>
<dbReference type="KEGG" id="kol:Kole_1451"/>
<dbReference type="eggNOG" id="COG0292">
    <property type="taxonomic scope" value="Bacteria"/>
</dbReference>
<dbReference type="HOGENOM" id="CLU_123265_0_1_0"/>
<dbReference type="OrthoDB" id="9808966at2"/>
<dbReference type="Proteomes" id="UP000002382">
    <property type="component" value="Chromosome"/>
</dbReference>
<dbReference type="GO" id="GO:1990904">
    <property type="term" value="C:ribonucleoprotein complex"/>
    <property type="evidence" value="ECO:0007669"/>
    <property type="project" value="UniProtKB-KW"/>
</dbReference>
<dbReference type="GO" id="GO:0005840">
    <property type="term" value="C:ribosome"/>
    <property type="evidence" value="ECO:0007669"/>
    <property type="project" value="UniProtKB-KW"/>
</dbReference>
<dbReference type="GO" id="GO:0019843">
    <property type="term" value="F:rRNA binding"/>
    <property type="evidence" value="ECO:0007669"/>
    <property type="project" value="UniProtKB-UniRule"/>
</dbReference>
<dbReference type="GO" id="GO:0003735">
    <property type="term" value="F:structural constituent of ribosome"/>
    <property type="evidence" value="ECO:0007669"/>
    <property type="project" value="InterPro"/>
</dbReference>
<dbReference type="GO" id="GO:0000027">
    <property type="term" value="P:ribosomal large subunit assembly"/>
    <property type="evidence" value="ECO:0007669"/>
    <property type="project" value="UniProtKB-UniRule"/>
</dbReference>
<dbReference type="GO" id="GO:0006412">
    <property type="term" value="P:translation"/>
    <property type="evidence" value="ECO:0007669"/>
    <property type="project" value="InterPro"/>
</dbReference>
<dbReference type="CDD" id="cd07026">
    <property type="entry name" value="Ribosomal_L20"/>
    <property type="match status" value="1"/>
</dbReference>
<dbReference type="FunFam" id="1.10.1900.20:FF:000001">
    <property type="entry name" value="50S ribosomal protein L20"/>
    <property type="match status" value="1"/>
</dbReference>
<dbReference type="Gene3D" id="6.10.160.10">
    <property type="match status" value="1"/>
</dbReference>
<dbReference type="Gene3D" id="1.10.1900.20">
    <property type="entry name" value="Ribosomal protein L20"/>
    <property type="match status" value="1"/>
</dbReference>
<dbReference type="HAMAP" id="MF_00382">
    <property type="entry name" value="Ribosomal_bL20"/>
    <property type="match status" value="1"/>
</dbReference>
<dbReference type="InterPro" id="IPR005813">
    <property type="entry name" value="Ribosomal_bL20"/>
</dbReference>
<dbReference type="InterPro" id="IPR049946">
    <property type="entry name" value="RIBOSOMAL_L20_CS"/>
</dbReference>
<dbReference type="InterPro" id="IPR035566">
    <property type="entry name" value="Ribosomal_protein_bL20_C"/>
</dbReference>
<dbReference type="NCBIfam" id="TIGR01032">
    <property type="entry name" value="rplT_bact"/>
    <property type="match status" value="1"/>
</dbReference>
<dbReference type="PANTHER" id="PTHR10986">
    <property type="entry name" value="39S RIBOSOMAL PROTEIN L20"/>
    <property type="match status" value="1"/>
</dbReference>
<dbReference type="Pfam" id="PF00453">
    <property type="entry name" value="Ribosomal_L20"/>
    <property type="match status" value="1"/>
</dbReference>
<dbReference type="PRINTS" id="PR00062">
    <property type="entry name" value="RIBOSOMALL20"/>
</dbReference>
<dbReference type="SUPFAM" id="SSF74731">
    <property type="entry name" value="Ribosomal protein L20"/>
    <property type="match status" value="1"/>
</dbReference>
<dbReference type="PROSITE" id="PS00937">
    <property type="entry name" value="RIBOSOMAL_L20"/>
    <property type="match status" value="1"/>
</dbReference>
<accession>C5CE41</accession>
<organism>
    <name type="scientific">Kosmotoga olearia (strain ATCC BAA-1733 / DSM 21960 / TBF 19.5.1)</name>
    <dbReference type="NCBI Taxonomy" id="521045"/>
    <lineage>
        <taxon>Bacteria</taxon>
        <taxon>Thermotogati</taxon>
        <taxon>Thermotogota</taxon>
        <taxon>Thermotogae</taxon>
        <taxon>Kosmotogales</taxon>
        <taxon>Kosmotogaceae</taxon>
        <taxon>Kosmotoga</taxon>
    </lineage>
</organism>
<reference key="1">
    <citation type="submission" date="2009-06" db="EMBL/GenBank/DDBJ databases">
        <title>Complete sequence of Thermotogales bacterium TBF 19.5.1.</title>
        <authorList>
            <consortium name="US DOE Joint Genome Institute"/>
            <person name="Lucas S."/>
            <person name="Copeland A."/>
            <person name="Lapidus A."/>
            <person name="Glavina del Rio T."/>
            <person name="Tice H."/>
            <person name="Bruce D."/>
            <person name="Goodwin L."/>
            <person name="Pitluck S."/>
            <person name="Chertkov O."/>
            <person name="Brettin T."/>
            <person name="Detter J.C."/>
            <person name="Han C."/>
            <person name="Schmutz J."/>
            <person name="Larimer F."/>
            <person name="Land M."/>
            <person name="Hauser L."/>
            <person name="Kyrpides N."/>
            <person name="Ovchinnikova G."/>
            <person name="Noll K."/>
        </authorList>
    </citation>
    <scope>NUCLEOTIDE SEQUENCE [LARGE SCALE GENOMIC DNA]</scope>
    <source>
        <strain>ATCC BAA-1733 / DSM 21960 / TBF 19.5.1</strain>
    </source>
</reference>
<sequence>MRVKGGVNSKKKKRKYLKAAKGYRGALSRRYRLAKQYYIRSGVYAYVGRKQKKRDFRKLWITRINAAARMEGIKYSELIHGLKLSGVNINRKMLADLAVNDFEAFKEYVALAKEALGK</sequence>
<feature type="chain" id="PRO_1000205718" description="Large ribosomal subunit protein bL20">
    <location>
        <begin position="1"/>
        <end position="118"/>
    </location>
</feature>
<evidence type="ECO:0000255" key="1">
    <source>
        <dbReference type="HAMAP-Rule" id="MF_00382"/>
    </source>
</evidence>
<evidence type="ECO:0000305" key="2"/>
<keyword id="KW-1185">Reference proteome</keyword>
<keyword id="KW-0687">Ribonucleoprotein</keyword>
<keyword id="KW-0689">Ribosomal protein</keyword>
<keyword id="KW-0694">RNA-binding</keyword>
<keyword id="KW-0699">rRNA-binding</keyword>
<proteinExistence type="inferred from homology"/>
<comment type="function">
    <text evidence="1">Binds directly to 23S ribosomal RNA and is necessary for the in vitro assembly process of the 50S ribosomal subunit. It is not involved in the protein synthesizing functions of that subunit.</text>
</comment>
<comment type="similarity">
    <text evidence="1">Belongs to the bacterial ribosomal protein bL20 family.</text>
</comment>